<comment type="function">
    <text evidence="2">Has aromatic amino acid transaminase activity.</text>
</comment>
<comment type="catalytic activity">
    <reaction>
        <text>an aromatic L-alpha-amino acid + 2-oxoglutarate = an aromatic oxo-acid + L-glutamate</text>
        <dbReference type="Rhea" id="RHEA:17533"/>
        <dbReference type="ChEBI" id="CHEBI:16810"/>
        <dbReference type="ChEBI" id="CHEBI:29985"/>
        <dbReference type="ChEBI" id="CHEBI:73309"/>
        <dbReference type="ChEBI" id="CHEBI:84824"/>
        <dbReference type="EC" id="2.6.1.57"/>
    </reaction>
</comment>
<comment type="cofactor">
    <cofactor evidence="1">
        <name>pyridoxal 5'-phosphate</name>
        <dbReference type="ChEBI" id="CHEBI:597326"/>
    </cofactor>
</comment>
<comment type="subcellular location">
    <subcellularLocation>
        <location evidence="4">Cytoplasm</location>
    </subcellularLocation>
</comment>
<comment type="similarity">
    <text evidence="3">Belongs to the class-I pyridoxal-phosphate-dependent aminotransferase family.</text>
</comment>
<evidence type="ECO:0000250" key="1">
    <source>
        <dbReference type="UniProtKB" id="P00509"/>
    </source>
</evidence>
<evidence type="ECO:0000250" key="2">
    <source>
        <dbReference type="UniProtKB" id="P53090"/>
    </source>
</evidence>
<evidence type="ECO:0000255" key="3"/>
<evidence type="ECO:0000269" key="4">
    <source>
    </source>
</evidence>
<evidence type="ECO:0000305" key="5"/>
<evidence type="ECO:0000312" key="6">
    <source>
        <dbReference type="EMBL" id="CAA21918.1"/>
    </source>
</evidence>
<keyword id="KW-0032">Aminotransferase</keyword>
<keyword id="KW-0963">Cytoplasm</keyword>
<keyword id="KW-0663">Pyridoxal phosphate</keyword>
<keyword id="KW-1185">Reference proteome</keyword>
<keyword id="KW-0808">Transferase</keyword>
<name>AATR2_SCHPO</name>
<proteinExistence type="inferred from homology"/>
<sequence length="481" mass="54756">MIRNSEDFSHHLSRESKAREKGPFQMLGRIKSSTGIDAISFSSGLPHPNKFAIRELSIKFPQLGCFKEENGTYAKEVNVTFNIKADPSEGLLNFSQSLQYGQCQGISELVGFIKEHIRRIHAPRYENWDIKMSNGNTSGLEYCLRLLVNYGDHVLTEKYTYPAAITAMRALGVQFVSVDMDSEGMLPESLEEIMRDWDISLGPRPHVLYTVPTGQNPTGSTLSLSRRKKLLALARKYDIIIVEDEPYYFLQMEDYNGSLNPAQQKCDGSTFLKSLVPSLLSLDTEGRVLRLDSFSKLIAPGTRLGYITGNSMFIDHITRIAEVCTESPSGICQSVLYAMLHNWGQEGFCAWLQELQYSYTVRRNAFLNVANKYLPNSVCIYHVPRAGLFLWVELNLNHYRFSDTKKSVSQIEMEIFLALVEKGVKTVCGQFFMANPERSTKIFFRFAYSIADFEDFEEGIKRFTSVINEHFNVESRVRICP</sequence>
<organism>
    <name type="scientific">Schizosaccharomyces pombe (strain 972 / ATCC 24843)</name>
    <name type="common">Fission yeast</name>
    <dbReference type="NCBI Taxonomy" id="284812"/>
    <lineage>
        <taxon>Eukaryota</taxon>
        <taxon>Fungi</taxon>
        <taxon>Dikarya</taxon>
        <taxon>Ascomycota</taxon>
        <taxon>Taphrinomycotina</taxon>
        <taxon>Schizosaccharomycetes</taxon>
        <taxon>Schizosaccharomycetales</taxon>
        <taxon>Schizosaccharomycetaceae</taxon>
        <taxon>Schizosaccharomyces</taxon>
    </lineage>
</organism>
<dbReference type="EC" id="2.6.1.57"/>
<dbReference type="EMBL" id="CU329671">
    <property type="protein sequence ID" value="CAA21918.1"/>
    <property type="molecule type" value="Genomic_DNA"/>
</dbReference>
<dbReference type="PIR" id="T39678">
    <property type="entry name" value="T39678"/>
</dbReference>
<dbReference type="RefSeq" id="NP_595128.1">
    <property type="nucleotide sequence ID" value="NM_001021035.2"/>
</dbReference>
<dbReference type="SMR" id="O94570"/>
<dbReference type="FunCoup" id="O94570">
    <property type="interactions" value="159"/>
</dbReference>
<dbReference type="STRING" id="284812.O94570"/>
<dbReference type="PaxDb" id="4896-SPBC1773.13.1"/>
<dbReference type="EnsemblFungi" id="SPBC1773.13.1">
    <property type="protein sequence ID" value="SPBC1773.13.1:pep"/>
    <property type="gene ID" value="SPBC1773.13"/>
</dbReference>
<dbReference type="KEGG" id="spo:2540092"/>
<dbReference type="PomBase" id="SPBC1773.13"/>
<dbReference type="VEuPathDB" id="FungiDB:SPBC1773.13"/>
<dbReference type="eggNOG" id="KOG0634">
    <property type="taxonomic scope" value="Eukaryota"/>
</dbReference>
<dbReference type="HOGENOM" id="CLU_017584_0_5_1"/>
<dbReference type="InParanoid" id="O94570"/>
<dbReference type="OMA" id="HAPRYEN"/>
<dbReference type="PhylomeDB" id="O94570"/>
<dbReference type="Reactome" id="R-SPO-71064">
    <property type="pathway name" value="Lysine catabolism"/>
</dbReference>
<dbReference type="Reactome" id="R-SPO-71240">
    <property type="pathway name" value="Tryptophan catabolism"/>
</dbReference>
<dbReference type="PRO" id="PR:O94570"/>
<dbReference type="Proteomes" id="UP000002485">
    <property type="component" value="Chromosome II"/>
</dbReference>
<dbReference type="GO" id="GO:0005829">
    <property type="term" value="C:cytosol"/>
    <property type="evidence" value="ECO:0007005"/>
    <property type="project" value="PomBase"/>
</dbReference>
<dbReference type="GO" id="GO:0005634">
    <property type="term" value="C:nucleus"/>
    <property type="evidence" value="ECO:0007005"/>
    <property type="project" value="PomBase"/>
</dbReference>
<dbReference type="GO" id="GO:0047536">
    <property type="term" value="F:2-aminoadipate transaminase activity"/>
    <property type="evidence" value="ECO:0000318"/>
    <property type="project" value="GO_Central"/>
</dbReference>
<dbReference type="GO" id="GO:0008793">
    <property type="term" value="F:aromatic-amino-acid transaminase activity"/>
    <property type="evidence" value="ECO:0000318"/>
    <property type="project" value="GO_Central"/>
</dbReference>
<dbReference type="GO" id="GO:0030170">
    <property type="term" value="F:pyridoxal phosphate binding"/>
    <property type="evidence" value="ECO:0007669"/>
    <property type="project" value="InterPro"/>
</dbReference>
<dbReference type="GO" id="GO:0009074">
    <property type="term" value="P:aromatic amino acid family catabolic process"/>
    <property type="evidence" value="ECO:0000318"/>
    <property type="project" value="GO_Central"/>
</dbReference>
<dbReference type="GO" id="GO:0019878">
    <property type="term" value="P:lysine biosynthetic process via aminoadipic acid"/>
    <property type="evidence" value="ECO:0000318"/>
    <property type="project" value="GO_Central"/>
</dbReference>
<dbReference type="GO" id="GO:0006571">
    <property type="term" value="P:tyrosine biosynthetic process"/>
    <property type="evidence" value="ECO:0000318"/>
    <property type="project" value="GO_Central"/>
</dbReference>
<dbReference type="CDD" id="cd00609">
    <property type="entry name" value="AAT_like"/>
    <property type="match status" value="1"/>
</dbReference>
<dbReference type="FunFam" id="3.40.640.10:FF:000074">
    <property type="entry name" value="Aromatic amino acid aminotransferase"/>
    <property type="match status" value="1"/>
</dbReference>
<dbReference type="Gene3D" id="3.40.640.10">
    <property type="entry name" value="Type I PLP-dependent aspartate aminotransferase-like (Major domain)"/>
    <property type="match status" value="1"/>
</dbReference>
<dbReference type="InterPro" id="IPR004839">
    <property type="entry name" value="Aminotransferase_I/II_large"/>
</dbReference>
<dbReference type="InterPro" id="IPR050859">
    <property type="entry name" value="Class-I_PLP-dep_aminotransf"/>
</dbReference>
<dbReference type="InterPro" id="IPR015424">
    <property type="entry name" value="PyrdxlP-dep_Trfase"/>
</dbReference>
<dbReference type="InterPro" id="IPR015421">
    <property type="entry name" value="PyrdxlP-dep_Trfase_major"/>
</dbReference>
<dbReference type="PANTHER" id="PTHR42790">
    <property type="entry name" value="AMINOTRANSFERASE"/>
    <property type="match status" value="1"/>
</dbReference>
<dbReference type="PANTHER" id="PTHR42790:SF21">
    <property type="entry name" value="AROMATIC_AMINOADIPATE AMINOTRANSFERASE 1"/>
    <property type="match status" value="1"/>
</dbReference>
<dbReference type="Pfam" id="PF00155">
    <property type="entry name" value="Aminotran_1_2"/>
    <property type="match status" value="1"/>
</dbReference>
<dbReference type="SUPFAM" id="SSF53383">
    <property type="entry name" value="PLP-dependent transferases"/>
    <property type="match status" value="1"/>
</dbReference>
<accession>O94570</accession>
<feature type="chain" id="PRO_0000308490" description="Aromatic amino acid aminotransferase C1773.13">
    <location>
        <begin position="1"/>
        <end position="481"/>
    </location>
</feature>
<gene>
    <name type="ORF">SPBC1773.13</name>
</gene>
<protein>
    <recommendedName>
        <fullName>Aromatic amino acid aminotransferase C1773.13</fullName>
        <ecNumber>2.6.1.57</ecNumber>
    </recommendedName>
</protein>
<reference evidence="6" key="1">
    <citation type="journal article" date="2002" name="Nature">
        <title>The genome sequence of Schizosaccharomyces pombe.</title>
        <authorList>
            <person name="Wood V."/>
            <person name="Gwilliam R."/>
            <person name="Rajandream M.A."/>
            <person name="Lyne M.H."/>
            <person name="Lyne R."/>
            <person name="Stewart A."/>
            <person name="Sgouros J.G."/>
            <person name="Peat N."/>
            <person name="Hayles J."/>
            <person name="Baker S.G."/>
            <person name="Basham D."/>
            <person name="Bowman S."/>
            <person name="Brooks K."/>
            <person name="Brown D."/>
            <person name="Brown S."/>
            <person name="Chillingworth T."/>
            <person name="Churcher C.M."/>
            <person name="Collins M."/>
            <person name="Connor R."/>
            <person name="Cronin A."/>
            <person name="Davis P."/>
            <person name="Feltwell T."/>
            <person name="Fraser A."/>
            <person name="Gentles S."/>
            <person name="Goble A."/>
            <person name="Hamlin N."/>
            <person name="Harris D.E."/>
            <person name="Hidalgo J."/>
            <person name="Hodgson G."/>
            <person name="Holroyd S."/>
            <person name="Hornsby T."/>
            <person name="Howarth S."/>
            <person name="Huckle E.J."/>
            <person name="Hunt S."/>
            <person name="Jagels K."/>
            <person name="James K.D."/>
            <person name="Jones L."/>
            <person name="Jones M."/>
            <person name="Leather S."/>
            <person name="McDonald S."/>
            <person name="McLean J."/>
            <person name="Mooney P."/>
            <person name="Moule S."/>
            <person name="Mungall K.L."/>
            <person name="Murphy L.D."/>
            <person name="Niblett D."/>
            <person name="Odell C."/>
            <person name="Oliver K."/>
            <person name="O'Neil S."/>
            <person name="Pearson D."/>
            <person name="Quail M.A."/>
            <person name="Rabbinowitsch E."/>
            <person name="Rutherford K.M."/>
            <person name="Rutter S."/>
            <person name="Saunders D."/>
            <person name="Seeger K."/>
            <person name="Sharp S."/>
            <person name="Skelton J."/>
            <person name="Simmonds M.N."/>
            <person name="Squares R."/>
            <person name="Squares S."/>
            <person name="Stevens K."/>
            <person name="Taylor K."/>
            <person name="Taylor R.G."/>
            <person name="Tivey A."/>
            <person name="Walsh S.V."/>
            <person name="Warren T."/>
            <person name="Whitehead S."/>
            <person name="Woodward J.R."/>
            <person name="Volckaert G."/>
            <person name="Aert R."/>
            <person name="Robben J."/>
            <person name="Grymonprez B."/>
            <person name="Weltjens I."/>
            <person name="Vanstreels E."/>
            <person name="Rieger M."/>
            <person name="Schaefer M."/>
            <person name="Mueller-Auer S."/>
            <person name="Gabel C."/>
            <person name="Fuchs M."/>
            <person name="Duesterhoeft A."/>
            <person name="Fritzc C."/>
            <person name="Holzer E."/>
            <person name="Moestl D."/>
            <person name="Hilbert H."/>
            <person name="Borzym K."/>
            <person name="Langer I."/>
            <person name="Beck A."/>
            <person name="Lehrach H."/>
            <person name="Reinhardt R."/>
            <person name="Pohl T.M."/>
            <person name="Eger P."/>
            <person name="Zimmermann W."/>
            <person name="Wedler H."/>
            <person name="Wambutt R."/>
            <person name="Purnelle B."/>
            <person name="Goffeau A."/>
            <person name="Cadieu E."/>
            <person name="Dreano S."/>
            <person name="Gloux S."/>
            <person name="Lelaure V."/>
            <person name="Mottier S."/>
            <person name="Galibert F."/>
            <person name="Aves S.J."/>
            <person name="Xiang Z."/>
            <person name="Hunt C."/>
            <person name="Moore K."/>
            <person name="Hurst S.M."/>
            <person name="Lucas M."/>
            <person name="Rochet M."/>
            <person name="Gaillardin C."/>
            <person name="Tallada V.A."/>
            <person name="Garzon A."/>
            <person name="Thode G."/>
            <person name="Daga R.R."/>
            <person name="Cruzado L."/>
            <person name="Jimenez J."/>
            <person name="Sanchez M."/>
            <person name="del Rey F."/>
            <person name="Benito J."/>
            <person name="Dominguez A."/>
            <person name="Revuelta J.L."/>
            <person name="Moreno S."/>
            <person name="Armstrong J."/>
            <person name="Forsburg S.L."/>
            <person name="Cerutti L."/>
            <person name="Lowe T."/>
            <person name="McCombie W.R."/>
            <person name="Paulsen I."/>
            <person name="Potashkin J."/>
            <person name="Shpakovski G.V."/>
            <person name="Ussery D."/>
            <person name="Barrell B.G."/>
            <person name="Nurse P."/>
        </authorList>
    </citation>
    <scope>NUCLEOTIDE SEQUENCE [LARGE SCALE GENOMIC DNA]</scope>
    <source>
        <strain>972 / ATCC 24843</strain>
    </source>
</reference>
<reference evidence="5" key="2">
    <citation type="journal article" date="2006" name="Nat. Biotechnol.">
        <title>ORFeome cloning and global analysis of protein localization in the fission yeast Schizosaccharomyces pombe.</title>
        <authorList>
            <person name="Matsuyama A."/>
            <person name="Arai R."/>
            <person name="Yashiroda Y."/>
            <person name="Shirai A."/>
            <person name="Kamata A."/>
            <person name="Sekido S."/>
            <person name="Kobayashi Y."/>
            <person name="Hashimoto A."/>
            <person name="Hamamoto M."/>
            <person name="Hiraoka Y."/>
            <person name="Horinouchi S."/>
            <person name="Yoshida M."/>
        </authorList>
    </citation>
    <scope>SUBCELLULAR LOCATION [LARGE SCALE ANALYSIS]</scope>
</reference>